<evidence type="ECO:0000255" key="1">
    <source>
        <dbReference type="HAMAP-Rule" id="MF_01315"/>
    </source>
</evidence>
<evidence type="ECO:0000256" key="2">
    <source>
        <dbReference type="SAM" id="MobiDB-lite"/>
    </source>
</evidence>
<evidence type="ECO:0000305" key="3"/>
<gene>
    <name evidence="1" type="primary">rpsM</name>
    <name type="ordered locus">AAur_2920</name>
</gene>
<protein>
    <recommendedName>
        <fullName evidence="1">Small ribosomal subunit protein uS13</fullName>
    </recommendedName>
    <alternativeName>
        <fullName evidence="3">30S ribosomal protein S13</fullName>
    </alternativeName>
</protein>
<dbReference type="EMBL" id="CP000474">
    <property type="protein sequence ID" value="ABM09763.1"/>
    <property type="status" value="ALT_INIT"/>
    <property type="molecule type" value="Genomic_DNA"/>
</dbReference>
<dbReference type="RefSeq" id="WP_011775569.1">
    <property type="nucleotide sequence ID" value="NC_008711.1"/>
</dbReference>
<dbReference type="SMR" id="A1R8R7"/>
<dbReference type="STRING" id="290340.AAur_2920"/>
<dbReference type="GeneID" id="97301764"/>
<dbReference type="KEGG" id="aau:AAur_2920"/>
<dbReference type="eggNOG" id="COG0099">
    <property type="taxonomic scope" value="Bacteria"/>
</dbReference>
<dbReference type="HOGENOM" id="CLU_103849_1_2_11"/>
<dbReference type="OrthoDB" id="9803610at2"/>
<dbReference type="Proteomes" id="UP000000637">
    <property type="component" value="Chromosome"/>
</dbReference>
<dbReference type="GO" id="GO:0005829">
    <property type="term" value="C:cytosol"/>
    <property type="evidence" value="ECO:0007669"/>
    <property type="project" value="TreeGrafter"/>
</dbReference>
<dbReference type="GO" id="GO:0015935">
    <property type="term" value="C:small ribosomal subunit"/>
    <property type="evidence" value="ECO:0007669"/>
    <property type="project" value="TreeGrafter"/>
</dbReference>
<dbReference type="GO" id="GO:0019843">
    <property type="term" value="F:rRNA binding"/>
    <property type="evidence" value="ECO:0007669"/>
    <property type="project" value="UniProtKB-UniRule"/>
</dbReference>
<dbReference type="GO" id="GO:0003735">
    <property type="term" value="F:structural constituent of ribosome"/>
    <property type="evidence" value="ECO:0007669"/>
    <property type="project" value="InterPro"/>
</dbReference>
<dbReference type="GO" id="GO:0000049">
    <property type="term" value="F:tRNA binding"/>
    <property type="evidence" value="ECO:0007669"/>
    <property type="project" value="UniProtKB-UniRule"/>
</dbReference>
<dbReference type="GO" id="GO:0006412">
    <property type="term" value="P:translation"/>
    <property type="evidence" value="ECO:0007669"/>
    <property type="project" value="UniProtKB-UniRule"/>
</dbReference>
<dbReference type="FunFam" id="1.10.8.50:FF:000001">
    <property type="entry name" value="30S ribosomal protein S13"/>
    <property type="match status" value="1"/>
</dbReference>
<dbReference type="FunFam" id="4.10.910.10:FF:000001">
    <property type="entry name" value="30S ribosomal protein S13"/>
    <property type="match status" value="1"/>
</dbReference>
<dbReference type="Gene3D" id="1.10.8.50">
    <property type="match status" value="1"/>
</dbReference>
<dbReference type="Gene3D" id="4.10.910.10">
    <property type="entry name" value="30s ribosomal protein s13, domain 2"/>
    <property type="match status" value="1"/>
</dbReference>
<dbReference type="HAMAP" id="MF_01315">
    <property type="entry name" value="Ribosomal_uS13"/>
    <property type="match status" value="1"/>
</dbReference>
<dbReference type="InterPro" id="IPR027437">
    <property type="entry name" value="Rbsml_uS13_C"/>
</dbReference>
<dbReference type="InterPro" id="IPR001892">
    <property type="entry name" value="Ribosomal_uS13"/>
</dbReference>
<dbReference type="InterPro" id="IPR010979">
    <property type="entry name" value="Ribosomal_uS13-like_H2TH"/>
</dbReference>
<dbReference type="InterPro" id="IPR019980">
    <property type="entry name" value="Ribosomal_uS13_bac-type"/>
</dbReference>
<dbReference type="InterPro" id="IPR018269">
    <property type="entry name" value="Ribosomal_uS13_CS"/>
</dbReference>
<dbReference type="NCBIfam" id="TIGR03631">
    <property type="entry name" value="uS13_bact"/>
    <property type="match status" value="1"/>
</dbReference>
<dbReference type="PANTHER" id="PTHR10871">
    <property type="entry name" value="30S RIBOSOMAL PROTEIN S13/40S RIBOSOMAL PROTEIN S18"/>
    <property type="match status" value="1"/>
</dbReference>
<dbReference type="PANTHER" id="PTHR10871:SF1">
    <property type="entry name" value="SMALL RIBOSOMAL SUBUNIT PROTEIN US13M"/>
    <property type="match status" value="1"/>
</dbReference>
<dbReference type="Pfam" id="PF00416">
    <property type="entry name" value="Ribosomal_S13"/>
    <property type="match status" value="1"/>
</dbReference>
<dbReference type="PIRSF" id="PIRSF002134">
    <property type="entry name" value="Ribosomal_S13"/>
    <property type="match status" value="1"/>
</dbReference>
<dbReference type="SUPFAM" id="SSF46946">
    <property type="entry name" value="S13-like H2TH domain"/>
    <property type="match status" value="1"/>
</dbReference>
<dbReference type="PROSITE" id="PS00646">
    <property type="entry name" value="RIBOSOMAL_S13_1"/>
    <property type="match status" value="1"/>
</dbReference>
<dbReference type="PROSITE" id="PS50159">
    <property type="entry name" value="RIBOSOMAL_S13_2"/>
    <property type="match status" value="1"/>
</dbReference>
<accession>A1R8R7</accession>
<organism>
    <name type="scientific">Paenarthrobacter aurescens (strain TC1)</name>
    <dbReference type="NCBI Taxonomy" id="290340"/>
    <lineage>
        <taxon>Bacteria</taxon>
        <taxon>Bacillati</taxon>
        <taxon>Actinomycetota</taxon>
        <taxon>Actinomycetes</taxon>
        <taxon>Micrococcales</taxon>
        <taxon>Micrococcaceae</taxon>
        <taxon>Paenarthrobacter</taxon>
    </lineage>
</organism>
<reference key="1">
    <citation type="journal article" date="2006" name="PLoS Genet.">
        <title>Secrets of soil survival revealed by the genome sequence of Arthrobacter aurescens TC1.</title>
        <authorList>
            <person name="Mongodin E.F."/>
            <person name="Shapir N."/>
            <person name="Daugherty S.C."/>
            <person name="DeBoy R.T."/>
            <person name="Emerson J.B."/>
            <person name="Shvartzbeyn A."/>
            <person name="Radune D."/>
            <person name="Vamathevan J."/>
            <person name="Riggs F."/>
            <person name="Grinberg V."/>
            <person name="Khouri H.M."/>
            <person name="Wackett L.P."/>
            <person name="Nelson K.E."/>
            <person name="Sadowsky M.J."/>
        </authorList>
    </citation>
    <scope>NUCLEOTIDE SEQUENCE [LARGE SCALE GENOMIC DNA]</scope>
    <source>
        <strain>TC1</strain>
    </source>
</reference>
<feature type="chain" id="PRO_0000306560" description="Small ribosomal subunit protein uS13">
    <location>
        <begin position="1"/>
        <end position="125"/>
    </location>
</feature>
<feature type="region of interest" description="Disordered" evidence="2">
    <location>
        <begin position="93"/>
        <end position="125"/>
    </location>
</feature>
<proteinExistence type="inferred from homology"/>
<comment type="function">
    <text evidence="1">Located at the top of the head of the 30S subunit, it contacts several helices of the 16S rRNA. In the 70S ribosome it contacts the 23S rRNA (bridge B1a) and protein L5 of the 50S subunit (bridge B1b), connecting the 2 subunits; these bridges are implicated in subunit movement. Contacts the tRNAs in the A and P-sites.</text>
</comment>
<comment type="subunit">
    <text evidence="1">Part of the 30S ribosomal subunit. Forms a loose heterodimer with protein S19. Forms two bridges to the 50S subunit in the 70S ribosome.</text>
</comment>
<comment type="similarity">
    <text evidence="1">Belongs to the universal ribosomal protein uS13 family.</text>
</comment>
<comment type="sequence caution" evidence="3">
    <conflict type="erroneous initiation">
        <sequence resource="EMBL-CDS" id="ABM09763"/>
    </conflict>
</comment>
<name>RS13_PAEAT</name>
<keyword id="KW-0687">Ribonucleoprotein</keyword>
<keyword id="KW-0689">Ribosomal protein</keyword>
<keyword id="KW-0694">RNA-binding</keyword>
<keyword id="KW-0699">rRNA-binding</keyword>
<keyword id="KW-0820">tRNA-binding</keyword>
<sequence length="125" mass="13997">MARLAGVDIPREKRLEIALTYIYGVGKTRAHETLAATGISADVRVKDLTDAELVQLRDYIEGNYKVEGDLRREVAADIRRKVEIGSYEGLRHRKGLPVRGQRTKTNARTRKGPKRTVAGKKKAGR</sequence>